<accession>Q5PHS1</accession>
<feature type="chain" id="PRO_0000348826" description="tRNA-cytidine(32) 2-sulfurtransferase">
    <location>
        <begin position="1"/>
        <end position="311"/>
    </location>
</feature>
<feature type="short sequence motif" description="PP-loop motif" evidence="1">
    <location>
        <begin position="47"/>
        <end position="52"/>
    </location>
</feature>
<feature type="binding site" evidence="1">
    <location>
        <position position="122"/>
    </location>
    <ligand>
        <name>[4Fe-4S] cluster</name>
        <dbReference type="ChEBI" id="CHEBI:49883"/>
    </ligand>
</feature>
<feature type="binding site" evidence="1">
    <location>
        <position position="125"/>
    </location>
    <ligand>
        <name>[4Fe-4S] cluster</name>
        <dbReference type="ChEBI" id="CHEBI:49883"/>
    </ligand>
</feature>
<feature type="binding site" evidence="1">
    <location>
        <position position="213"/>
    </location>
    <ligand>
        <name>[4Fe-4S] cluster</name>
        <dbReference type="ChEBI" id="CHEBI:49883"/>
    </ligand>
</feature>
<gene>
    <name evidence="1" type="primary">ttcA</name>
    <name type="ordered locus">SPA1231</name>
</gene>
<name>TTCA_SALPA</name>
<proteinExistence type="inferred from homology"/>
<evidence type="ECO:0000255" key="1">
    <source>
        <dbReference type="HAMAP-Rule" id="MF_01850"/>
    </source>
</evidence>
<organism>
    <name type="scientific">Salmonella paratyphi A (strain ATCC 9150 / SARB42)</name>
    <dbReference type="NCBI Taxonomy" id="295319"/>
    <lineage>
        <taxon>Bacteria</taxon>
        <taxon>Pseudomonadati</taxon>
        <taxon>Pseudomonadota</taxon>
        <taxon>Gammaproteobacteria</taxon>
        <taxon>Enterobacterales</taxon>
        <taxon>Enterobacteriaceae</taxon>
        <taxon>Salmonella</taxon>
    </lineage>
</organism>
<keyword id="KW-0004">4Fe-4S</keyword>
<keyword id="KW-0067">ATP-binding</keyword>
<keyword id="KW-0963">Cytoplasm</keyword>
<keyword id="KW-0408">Iron</keyword>
<keyword id="KW-0411">Iron-sulfur</keyword>
<keyword id="KW-0460">Magnesium</keyword>
<keyword id="KW-0479">Metal-binding</keyword>
<keyword id="KW-0547">Nucleotide-binding</keyword>
<keyword id="KW-0694">RNA-binding</keyword>
<keyword id="KW-0808">Transferase</keyword>
<keyword id="KW-0819">tRNA processing</keyword>
<keyword id="KW-0820">tRNA-binding</keyword>
<protein>
    <recommendedName>
        <fullName evidence="1">tRNA-cytidine(32) 2-sulfurtransferase</fullName>
        <ecNumber evidence="1">2.8.1.-</ecNumber>
    </recommendedName>
    <alternativeName>
        <fullName evidence="1">Two-thiocytidine biosynthesis protein A</fullName>
    </alternativeName>
    <alternativeName>
        <fullName evidence="1">tRNA 2-thiocytidine biosynthesis protein TtcA</fullName>
    </alternativeName>
</protein>
<dbReference type="EC" id="2.8.1.-" evidence="1"/>
<dbReference type="EMBL" id="CP000026">
    <property type="protein sequence ID" value="AAV77183.1"/>
    <property type="molecule type" value="Genomic_DNA"/>
</dbReference>
<dbReference type="RefSeq" id="WP_001156210.1">
    <property type="nucleotide sequence ID" value="NC_006511.1"/>
</dbReference>
<dbReference type="SMR" id="Q5PHS1"/>
<dbReference type="KEGG" id="spt:SPA1231"/>
<dbReference type="HOGENOM" id="CLU_026481_0_0_6"/>
<dbReference type="Proteomes" id="UP000008185">
    <property type="component" value="Chromosome"/>
</dbReference>
<dbReference type="GO" id="GO:0005737">
    <property type="term" value="C:cytoplasm"/>
    <property type="evidence" value="ECO:0007669"/>
    <property type="project" value="UniProtKB-SubCell"/>
</dbReference>
<dbReference type="GO" id="GO:0051539">
    <property type="term" value="F:4 iron, 4 sulfur cluster binding"/>
    <property type="evidence" value="ECO:0007669"/>
    <property type="project" value="UniProtKB-UniRule"/>
</dbReference>
<dbReference type="GO" id="GO:0005524">
    <property type="term" value="F:ATP binding"/>
    <property type="evidence" value="ECO:0007669"/>
    <property type="project" value="UniProtKB-UniRule"/>
</dbReference>
<dbReference type="GO" id="GO:0000287">
    <property type="term" value="F:magnesium ion binding"/>
    <property type="evidence" value="ECO:0007669"/>
    <property type="project" value="UniProtKB-UniRule"/>
</dbReference>
<dbReference type="GO" id="GO:0016783">
    <property type="term" value="F:sulfurtransferase activity"/>
    <property type="evidence" value="ECO:0007669"/>
    <property type="project" value="UniProtKB-UniRule"/>
</dbReference>
<dbReference type="GO" id="GO:0000049">
    <property type="term" value="F:tRNA binding"/>
    <property type="evidence" value="ECO:0007669"/>
    <property type="project" value="UniProtKB-KW"/>
</dbReference>
<dbReference type="GO" id="GO:0034227">
    <property type="term" value="P:tRNA thio-modification"/>
    <property type="evidence" value="ECO:0007669"/>
    <property type="project" value="UniProtKB-UniRule"/>
</dbReference>
<dbReference type="CDD" id="cd24138">
    <property type="entry name" value="TtcA-like"/>
    <property type="match status" value="1"/>
</dbReference>
<dbReference type="FunFam" id="3.40.50.620:FF:000046">
    <property type="entry name" value="tRNA-cytidine(32) 2-sulfurtransferase"/>
    <property type="match status" value="1"/>
</dbReference>
<dbReference type="Gene3D" id="3.40.50.620">
    <property type="entry name" value="HUPs"/>
    <property type="match status" value="1"/>
</dbReference>
<dbReference type="HAMAP" id="MF_01850">
    <property type="entry name" value="TtcA"/>
    <property type="match status" value="1"/>
</dbReference>
<dbReference type="InterPro" id="IPR014729">
    <property type="entry name" value="Rossmann-like_a/b/a_fold"/>
</dbReference>
<dbReference type="InterPro" id="IPR011063">
    <property type="entry name" value="TilS/TtcA_N"/>
</dbReference>
<dbReference type="InterPro" id="IPR012089">
    <property type="entry name" value="tRNA_Cyd_32_2_STrfase"/>
</dbReference>
<dbReference type="InterPro" id="IPR035107">
    <property type="entry name" value="tRNA_thiolation_TtcA_Ctu1"/>
</dbReference>
<dbReference type="NCBIfam" id="NF007972">
    <property type="entry name" value="PRK10696.1"/>
    <property type="match status" value="1"/>
</dbReference>
<dbReference type="PANTHER" id="PTHR43686:SF1">
    <property type="entry name" value="AMINOTRAN_5 DOMAIN-CONTAINING PROTEIN"/>
    <property type="match status" value="1"/>
</dbReference>
<dbReference type="PANTHER" id="PTHR43686">
    <property type="entry name" value="SULFURTRANSFERASE-RELATED"/>
    <property type="match status" value="1"/>
</dbReference>
<dbReference type="Pfam" id="PF01171">
    <property type="entry name" value="ATP_bind_3"/>
    <property type="match status" value="1"/>
</dbReference>
<dbReference type="PIRSF" id="PIRSF004976">
    <property type="entry name" value="ATPase_YdaO"/>
    <property type="match status" value="1"/>
</dbReference>
<dbReference type="SUPFAM" id="SSF52402">
    <property type="entry name" value="Adenine nucleotide alpha hydrolases-like"/>
    <property type="match status" value="1"/>
</dbReference>
<sequence length="311" mass="35374">MQEIQKNTKKEQYNLNKLQKRLRRNVGEAIADFNMIEEGDRIMVCLSGGKDSYTMLEILRNLQQSAPINFSLVAVNLDQKQPGFPEHILPAYLEQLGVEYKIVEENTYGIVKEKIPEGKTTCSLCSRLRRGILYRTATELGATKIALGHHRDDILQTLFLNMFYGGKMKGMPPKLMSDDGKHIVIRPLAYCREKDIIRFAEAKAFPIIPCNLCGSQPNLQRQVIADMLRDWDKRYPGRIETMFSAMQNVVPSHLCDTNLFDFKGITHGSEVVDGGDLAFDREEIPLQPAGWQPEEDDTSLEALRLDVIEVK</sequence>
<reference key="1">
    <citation type="journal article" date="2004" name="Nat. Genet.">
        <title>Comparison of genome degradation in Paratyphi A and Typhi, human-restricted serovars of Salmonella enterica that cause typhoid.</title>
        <authorList>
            <person name="McClelland M."/>
            <person name="Sanderson K.E."/>
            <person name="Clifton S.W."/>
            <person name="Latreille P."/>
            <person name="Porwollik S."/>
            <person name="Sabo A."/>
            <person name="Meyer R."/>
            <person name="Bieri T."/>
            <person name="Ozersky P."/>
            <person name="McLellan M."/>
            <person name="Harkins C.R."/>
            <person name="Wang C."/>
            <person name="Nguyen C."/>
            <person name="Berghoff A."/>
            <person name="Elliott G."/>
            <person name="Kohlberg S."/>
            <person name="Strong C."/>
            <person name="Du F."/>
            <person name="Carter J."/>
            <person name="Kremizki C."/>
            <person name="Layman D."/>
            <person name="Leonard S."/>
            <person name="Sun H."/>
            <person name="Fulton L."/>
            <person name="Nash W."/>
            <person name="Miner T."/>
            <person name="Minx P."/>
            <person name="Delehaunty K."/>
            <person name="Fronick C."/>
            <person name="Magrini V."/>
            <person name="Nhan M."/>
            <person name="Warren W."/>
            <person name="Florea L."/>
            <person name="Spieth J."/>
            <person name="Wilson R.K."/>
        </authorList>
    </citation>
    <scope>NUCLEOTIDE SEQUENCE [LARGE SCALE GENOMIC DNA]</scope>
    <source>
        <strain>ATCC 9150 / SARB42</strain>
    </source>
</reference>
<comment type="function">
    <text evidence="1">Catalyzes the ATP-dependent 2-thiolation of cytidine in position 32 of tRNA, to form 2-thiocytidine (s(2)C32). The sulfur atoms are provided by the cysteine/cysteine desulfurase (IscS) system.</text>
</comment>
<comment type="catalytic activity">
    <reaction evidence="1">
        <text>cytidine(32) in tRNA + S-sulfanyl-L-cysteinyl-[cysteine desulfurase] + AH2 + ATP = 2-thiocytidine(32) in tRNA + L-cysteinyl-[cysteine desulfurase] + A + AMP + diphosphate + H(+)</text>
        <dbReference type="Rhea" id="RHEA:57048"/>
        <dbReference type="Rhea" id="RHEA-COMP:10288"/>
        <dbReference type="Rhea" id="RHEA-COMP:12157"/>
        <dbReference type="Rhea" id="RHEA-COMP:12158"/>
        <dbReference type="Rhea" id="RHEA-COMP:14821"/>
        <dbReference type="ChEBI" id="CHEBI:13193"/>
        <dbReference type="ChEBI" id="CHEBI:15378"/>
        <dbReference type="ChEBI" id="CHEBI:17499"/>
        <dbReference type="ChEBI" id="CHEBI:29950"/>
        <dbReference type="ChEBI" id="CHEBI:30616"/>
        <dbReference type="ChEBI" id="CHEBI:33019"/>
        <dbReference type="ChEBI" id="CHEBI:61963"/>
        <dbReference type="ChEBI" id="CHEBI:82748"/>
        <dbReference type="ChEBI" id="CHEBI:141453"/>
        <dbReference type="ChEBI" id="CHEBI:456215"/>
    </reaction>
    <physiologicalReaction direction="left-to-right" evidence="1">
        <dbReference type="Rhea" id="RHEA:57049"/>
    </physiologicalReaction>
</comment>
<comment type="cofactor">
    <cofactor evidence="1">
        <name>Mg(2+)</name>
        <dbReference type="ChEBI" id="CHEBI:18420"/>
    </cofactor>
</comment>
<comment type="cofactor">
    <cofactor evidence="1">
        <name>[4Fe-4S] cluster</name>
        <dbReference type="ChEBI" id="CHEBI:49883"/>
    </cofactor>
    <text evidence="1">Binds 1 [4Fe-4S] cluster per subunit. The cluster is chelated by three Cys residues, the fourth Fe has a free coordination site that may bind a sulfur atom transferred from the persulfide of IscS.</text>
</comment>
<comment type="pathway">
    <text evidence="1">tRNA modification.</text>
</comment>
<comment type="subunit">
    <text evidence="1">Homodimer.</text>
</comment>
<comment type="subcellular location">
    <subcellularLocation>
        <location evidence="1">Cytoplasm</location>
    </subcellularLocation>
</comment>
<comment type="miscellaneous">
    <text evidence="1">The thiolation reaction likely consists of two steps: a first activation step by ATP to form an adenylated intermediate of the target base of tRNA, and a second nucleophilic substitution step of the sulfur (S) atom supplied by the hydrosulfide attached to the Fe-S cluster.</text>
</comment>
<comment type="similarity">
    <text evidence="1">Belongs to the TtcA family.</text>
</comment>